<comment type="function">
    <text evidence="1">Component of the sulfite reductase complex that catalyzes the 6-electron reduction of sulfite to sulfide. This is one of several activities required for the biosynthesis of L-cysteine from sulfate.</text>
</comment>
<comment type="catalytic activity">
    <reaction evidence="1">
        <text>hydrogen sulfide + 3 NADP(+) + 3 H2O = sulfite + 3 NADPH + 4 H(+)</text>
        <dbReference type="Rhea" id="RHEA:13801"/>
        <dbReference type="ChEBI" id="CHEBI:15377"/>
        <dbReference type="ChEBI" id="CHEBI:15378"/>
        <dbReference type="ChEBI" id="CHEBI:17359"/>
        <dbReference type="ChEBI" id="CHEBI:29919"/>
        <dbReference type="ChEBI" id="CHEBI:57783"/>
        <dbReference type="ChEBI" id="CHEBI:58349"/>
        <dbReference type="EC" id="1.8.1.2"/>
    </reaction>
</comment>
<comment type="cofactor">
    <cofactor evidence="1">
        <name>siroheme</name>
        <dbReference type="ChEBI" id="CHEBI:60052"/>
    </cofactor>
    <text evidence="1">Binds 1 siroheme per subunit.</text>
</comment>
<comment type="cofactor">
    <cofactor evidence="1">
        <name>[4Fe-4S] cluster</name>
        <dbReference type="ChEBI" id="CHEBI:49883"/>
    </cofactor>
    <text evidence="1">Binds 1 [4Fe-4S] cluster per subunit.</text>
</comment>
<comment type="pathway">
    <text evidence="1">Sulfur metabolism; hydrogen sulfide biosynthesis; hydrogen sulfide from sulfite (NADPH route): step 1/1.</text>
</comment>
<comment type="subunit">
    <text evidence="1">Alpha(8)-beta(8). The alpha component is a flavoprotein, the beta component is a hemoprotein.</text>
</comment>
<comment type="similarity">
    <text evidence="1">Belongs to the nitrite and sulfite reductase 4Fe-4S domain family.</text>
</comment>
<organism>
    <name type="scientific">Staphylococcus epidermidis (strain ATCC 12228 / FDA PCI 1200)</name>
    <dbReference type="NCBI Taxonomy" id="176280"/>
    <lineage>
        <taxon>Bacteria</taxon>
        <taxon>Bacillati</taxon>
        <taxon>Bacillota</taxon>
        <taxon>Bacilli</taxon>
        <taxon>Bacillales</taxon>
        <taxon>Staphylococcaceae</taxon>
        <taxon>Staphylococcus</taxon>
    </lineage>
</organism>
<dbReference type="EC" id="1.8.1.2" evidence="1"/>
<dbReference type="EMBL" id="AE015929">
    <property type="protein sequence ID" value="AAO05821.1"/>
    <property type="molecule type" value="Genomic_DNA"/>
</dbReference>
<dbReference type="RefSeq" id="NP_765734.1">
    <property type="nucleotide sequence ID" value="NC_004461.1"/>
</dbReference>
<dbReference type="RefSeq" id="WP_002470366.1">
    <property type="nucleotide sequence ID" value="NZ_WBME01000005.1"/>
</dbReference>
<dbReference type="SMR" id="Q8CMX5"/>
<dbReference type="KEGG" id="sep:SE_2179"/>
<dbReference type="PATRIC" id="fig|176280.10.peg.2128"/>
<dbReference type="eggNOG" id="COG0155">
    <property type="taxonomic scope" value="Bacteria"/>
</dbReference>
<dbReference type="HOGENOM" id="CLU_001975_3_2_9"/>
<dbReference type="OrthoDB" id="9803707at2"/>
<dbReference type="UniPathway" id="UPA00140">
    <property type="reaction ID" value="UER00207"/>
</dbReference>
<dbReference type="Proteomes" id="UP000001411">
    <property type="component" value="Chromosome"/>
</dbReference>
<dbReference type="GO" id="GO:0009337">
    <property type="term" value="C:sulfite reductase complex (NADPH)"/>
    <property type="evidence" value="ECO:0007669"/>
    <property type="project" value="InterPro"/>
</dbReference>
<dbReference type="GO" id="GO:0051539">
    <property type="term" value="F:4 iron, 4 sulfur cluster binding"/>
    <property type="evidence" value="ECO:0007669"/>
    <property type="project" value="UniProtKB-KW"/>
</dbReference>
<dbReference type="GO" id="GO:0020037">
    <property type="term" value="F:heme binding"/>
    <property type="evidence" value="ECO:0007669"/>
    <property type="project" value="InterPro"/>
</dbReference>
<dbReference type="GO" id="GO:0046872">
    <property type="term" value="F:metal ion binding"/>
    <property type="evidence" value="ECO:0007669"/>
    <property type="project" value="UniProtKB-KW"/>
</dbReference>
<dbReference type="GO" id="GO:0050661">
    <property type="term" value="F:NADP binding"/>
    <property type="evidence" value="ECO:0007669"/>
    <property type="project" value="InterPro"/>
</dbReference>
<dbReference type="GO" id="GO:0050311">
    <property type="term" value="F:sulfite reductase (ferredoxin) activity"/>
    <property type="evidence" value="ECO:0007669"/>
    <property type="project" value="TreeGrafter"/>
</dbReference>
<dbReference type="GO" id="GO:0004783">
    <property type="term" value="F:sulfite reductase (NADPH) activity"/>
    <property type="evidence" value="ECO:0007669"/>
    <property type="project" value="UniProtKB-UniRule"/>
</dbReference>
<dbReference type="GO" id="GO:0019344">
    <property type="term" value="P:cysteine biosynthetic process"/>
    <property type="evidence" value="ECO:0007669"/>
    <property type="project" value="UniProtKB-KW"/>
</dbReference>
<dbReference type="GO" id="GO:0070814">
    <property type="term" value="P:hydrogen sulfide biosynthetic process"/>
    <property type="evidence" value="ECO:0007669"/>
    <property type="project" value="UniProtKB-UniRule"/>
</dbReference>
<dbReference type="GO" id="GO:0000103">
    <property type="term" value="P:sulfate assimilation"/>
    <property type="evidence" value="ECO:0007669"/>
    <property type="project" value="UniProtKB-UniRule"/>
</dbReference>
<dbReference type="FunFam" id="3.30.413.10:FF:000003">
    <property type="entry name" value="Sulfite reductase [NADPH] hemoprotein beta-component"/>
    <property type="match status" value="1"/>
</dbReference>
<dbReference type="FunFam" id="3.30.413.10:FF:000004">
    <property type="entry name" value="Sulfite reductase [NADPH] hemoprotein beta-component"/>
    <property type="match status" value="1"/>
</dbReference>
<dbReference type="Gene3D" id="3.30.413.10">
    <property type="entry name" value="Sulfite Reductase Hemoprotein, domain 1"/>
    <property type="match status" value="2"/>
</dbReference>
<dbReference type="HAMAP" id="MF_01540">
    <property type="entry name" value="CysI"/>
    <property type="match status" value="1"/>
</dbReference>
<dbReference type="InterPro" id="IPR011786">
    <property type="entry name" value="CysI"/>
</dbReference>
<dbReference type="InterPro" id="IPR005117">
    <property type="entry name" value="NiRdtase/SiRdtase_haem-b_fer"/>
</dbReference>
<dbReference type="InterPro" id="IPR036136">
    <property type="entry name" value="Nit/Sulf_reduc_fer-like_dom_sf"/>
</dbReference>
<dbReference type="InterPro" id="IPR006067">
    <property type="entry name" value="NO2/SO3_Rdtase_4Fe4S_dom"/>
</dbReference>
<dbReference type="InterPro" id="IPR045169">
    <property type="entry name" value="NO2/SO3_Rdtase_4Fe4S_prot"/>
</dbReference>
<dbReference type="InterPro" id="IPR045854">
    <property type="entry name" value="NO2/SO3_Rdtase_4Fe4S_sf"/>
</dbReference>
<dbReference type="InterPro" id="IPR006066">
    <property type="entry name" value="NO2/SO3_Rdtase_FeS/sirohaem_BS"/>
</dbReference>
<dbReference type="NCBIfam" id="TIGR02041">
    <property type="entry name" value="CysI"/>
    <property type="match status" value="1"/>
</dbReference>
<dbReference type="NCBIfam" id="NF010029">
    <property type="entry name" value="PRK13504.1"/>
    <property type="match status" value="1"/>
</dbReference>
<dbReference type="PANTHER" id="PTHR11493:SF47">
    <property type="entry name" value="SULFITE REDUCTASE [NADPH] SUBUNIT BETA"/>
    <property type="match status" value="1"/>
</dbReference>
<dbReference type="PANTHER" id="PTHR11493">
    <property type="entry name" value="SULFITE REDUCTASE [NADPH] SUBUNIT BETA-RELATED"/>
    <property type="match status" value="1"/>
</dbReference>
<dbReference type="Pfam" id="PF01077">
    <property type="entry name" value="NIR_SIR"/>
    <property type="match status" value="1"/>
</dbReference>
<dbReference type="Pfam" id="PF03460">
    <property type="entry name" value="NIR_SIR_ferr"/>
    <property type="match status" value="2"/>
</dbReference>
<dbReference type="PRINTS" id="PR00397">
    <property type="entry name" value="SIROHAEM"/>
</dbReference>
<dbReference type="SUPFAM" id="SSF56014">
    <property type="entry name" value="Nitrite and sulphite reductase 4Fe-4S domain-like"/>
    <property type="match status" value="2"/>
</dbReference>
<dbReference type="SUPFAM" id="SSF55124">
    <property type="entry name" value="Nitrite/Sulfite reductase N-terminal domain-like"/>
    <property type="match status" value="2"/>
</dbReference>
<dbReference type="PROSITE" id="PS00365">
    <property type="entry name" value="NIR_SIR"/>
    <property type="match status" value="1"/>
</dbReference>
<sequence length="572" mass="65357">MVNTNNHISEELDKNLDEMEFLKANSDFLRGTIEQSLANPITGSITQDDAKLLKFHGSYMQDDRDLRDERRKQKLEPAYSFMIRVRVPGGKATPEQWIAMDDISNQYANHTIKLTTRQAFQFHGILKRNLKQSMKNINHAVLDSIAACGDVNRNTMCNPNPYQSQVHKEINDYATRISNHLLPRTNAYHEIWLDGEKVLDSSEEKEPIYGNTYLPRKFKIGIAVPPSNDIDVYSQDIGLIAIVEQDELIGFNVTIGGGMGMTHGITETYPQLGRLIGFIPKEKVVDVCEKILTIQRDYGNRENRKNARFKYTVDRLGETWVTEELNRRLGWEIKAPRDFEFEHNGDRLGWIEGINNWNFTLFIQNGRVKDTEDYLLKTALREIAEIHTGDFRLSPNQNLVIANVSPEKKEEIQAIIDKYKLTDGKNYTGLRRNSMACVAFPTCGLAMAESERYLPSLITKIEDLLDESGLKEEEITIRMTGCPNGCARPALAEIAFIGKAPGKYNMYLGGSFKGERLNKIYKENIDENEILESLRPLLLRYSKERLDGEHFGDFVIRDGVIAKVHDGRDFHS</sequence>
<feature type="chain" id="PRO_0000388521" description="Sulfite reductase [NADPH] hemoprotein beta-component">
    <location>
        <begin position="1"/>
        <end position="572"/>
    </location>
</feature>
<feature type="binding site" evidence="1">
    <location>
        <position position="437"/>
    </location>
    <ligand>
        <name>[4Fe-4S] cluster</name>
        <dbReference type="ChEBI" id="CHEBI:49883"/>
    </ligand>
</feature>
<feature type="binding site" evidence="1">
    <location>
        <position position="443"/>
    </location>
    <ligand>
        <name>[4Fe-4S] cluster</name>
        <dbReference type="ChEBI" id="CHEBI:49883"/>
    </ligand>
</feature>
<feature type="binding site" evidence="1">
    <location>
        <position position="482"/>
    </location>
    <ligand>
        <name>[4Fe-4S] cluster</name>
        <dbReference type="ChEBI" id="CHEBI:49883"/>
    </ligand>
</feature>
<feature type="binding site" evidence="1">
    <location>
        <position position="486"/>
    </location>
    <ligand>
        <name>[4Fe-4S] cluster</name>
        <dbReference type="ChEBI" id="CHEBI:49883"/>
    </ligand>
</feature>
<feature type="binding site" description="axial binding residue" evidence="1">
    <location>
        <position position="486"/>
    </location>
    <ligand>
        <name>siroheme</name>
        <dbReference type="ChEBI" id="CHEBI:60052"/>
    </ligand>
    <ligandPart>
        <name>Fe</name>
        <dbReference type="ChEBI" id="CHEBI:18248"/>
    </ligandPart>
</feature>
<keyword id="KW-0004">4Fe-4S</keyword>
<keyword id="KW-0028">Amino-acid biosynthesis</keyword>
<keyword id="KW-0198">Cysteine biosynthesis</keyword>
<keyword id="KW-0349">Heme</keyword>
<keyword id="KW-0408">Iron</keyword>
<keyword id="KW-0411">Iron-sulfur</keyword>
<keyword id="KW-0479">Metal-binding</keyword>
<keyword id="KW-0521">NADP</keyword>
<keyword id="KW-0560">Oxidoreductase</keyword>
<protein>
    <recommendedName>
        <fullName evidence="1">Sulfite reductase [NADPH] hemoprotein beta-component</fullName>
        <shortName evidence="1">SiR-HP</shortName>
        <shortName evidence="1">SiRHP</shortName>
        <ecNumber evidence="1">1.8.1.2</ecNumber>
    </recommendedName>
</protein>
<gene>
    <name evidence="1" type="primary">cysI</name>
    <name type="ordered locus">SE_2179</name>
</gene>
<proteinExistence type="inferred from homology"/>
<accession>Q8CMX5</accession>
<evidence type="ECO:0000255" key="1">
    <source>
        <dbReference type="HAMAP-Rule" id="MF_01540"/>
    </source>
</evidence>
<reference key="1">
    <citation type="journal article" date="2003" name="Mol. Microbiol.">
        <title>Genome-based analysis of virulence genes in a non-biofilm-forming Staphylococcus epidermidis strain (ATCC 12228).</title>
        <authorList>
            <person name="Zhang Y.-Q."/>
            <person name="Ren S.-X."/>
            <person name="Li H.-L."/>
            <person name="Wang Y.-X."/>
            <person name="Fu G."/>
            <person name="Yang J."/>
            <person name="Qin Z.-Q."/>
            <person name="Miao Y.-G."/>
            <person name="Wang W.-Y."/>
            <person name="Chen R.-S."/>
            <person name="Shen Y."/>
            <person name="Chen Z."/>
            <person name="Yuan Z.-H."/>
            <person name="Zhao G.-P."/>
            <person name="Qu D."/>
            <person name="Danchin A."/>
            <person name="Wen Y.-M."/>
        </authorList>
    </citation>
    <scope>NUCLEOTIDE SEQUENCE [LARGE SCALE GENOMIC DNA]</scope>
    <source>
        <strain>ATCC 12228 / FDA PCI 1200</strain>
    </source>
</reference>
<name>CYSI_STAES</name>